<gene>
    <name evidence="1" type="primary">rplV</name>
    <name type="ordered locus">PG_1933</name>
</gene>
<sequence length="134" mass="15327">MGARKHNSAEARKEALKQMYFAKLRNVPTSPRKMRLVADMIRGMEVNRALGVLKFSNKEASARVEKLLRSAVANWEEKNERKAEEGELFVSRICVDGASTLKRLRPAPQGRGYRIRKRSNHVTIYVDTLNNDNN</sequence>
<organism>
    <name type="scientific">Porphyromonas gingivalis (strain ATCC BAA-308 / W83)</name>
    <dbReference type="NCBI Taxonomy" id="242619"/>
    <lineage>
        <taxon>Bacteria</taxon>
        <taxon>Pseudomonadati</taxon>
        <taxon>Bacteroidota</taxon>
        <taxon>Bacteroidia</taxon>
        <taxon>Bacteroidales</taxon>
        <taxon>Porphyromonadaceae</taxon>
        <taxon>Porphyromonas</taxon>
    </lineage>
</organism>
<protein>
    <recommendedName>
        <fullName evidence="1">Large ribosomal subunit protein uL22</fullName>
    </recommendedName>
    <alternativeName>
        <fullName evidence="2">50S ribosomal protein L22</fullName>
    </alternativeName>
</protein>
<name>RL22_PORGI</name>
<reference key="1">
    <citation type="journal article" date="2003" name="J. Bacteriol.">
        <title>Complete genome sequence of the oral pathogenic bacterium Porphyromonas gingivalis strain W83.</title>
        <authorList>
            <person name="Nelson K.E."/>
            <person name="Fleischmann R.D."/>
            <person name="DeBoy R.T."/>
            <person name="Paulsen I.T."/>
            <person name="Fouts D.E."/>
            <person name="Eisen J.A."/>
            <person name="Daugherty S.C."/>
            <person name="Dodson R.J."/>
            <person name="Durkin A.S."/>
            <person name="Gwinn M.L."/>
            <person name="Haft D.H."/>
            <person name="Kolonay J.F."/>
            <person name="Nelson W.C."/>
            <person name="Mason T.M."/>
            <person name="Tallon L."/>
            <person name="Gray J."/>
            <person name="Granger D."/>
            <person name="Tettelin H."/>
            <person name="Dong H."/>
            <person name="Galvin J.L."/>
            <person name="Duncan M.J."/>
            <person name="Dewhirst F.E."/>
            <person name="Fraser C.M."/>
        </authorList>
    </citation>
    <scope>NUCLEOTIDE SEQUENCE [LARGE SCALE GENOMIC DNA]</scope>
    <source>
        <strain>ATCC BAA-308 / W83</strain>
    </source>
</reference>
<dbReference type="EMBL" id="AE015924">
    <property type="protein sequence ID" value="AAQ66914.1"/>
    <property type="status" value="ALT_INIT"/>
    <property type="molecule type" value="Genomic_DNA"/>
</dbReference>
<dbReference type="RefSeq" id="WP_004583593.1">
    <property type="nucleotide sequence ID" value="NC_002950.2"/>
</dbReference>
<dbReference type="SMR" id="Q7MTL8"/>
<dbReference type="STRING" id="242619.PG_1933"/>
<dbReference type="EnsemblBacteria" id="AAQ66914">
    <property type="protein sequence ID" value="AAQ66914"/>
    <property type="gene ID" value="PG_1933"/>
</dbReference>
<dbReference type="GeneID" id="29257014"/>
<dbReference type="GeneID" id="57239591"/>
<dbReference type="KEGG" id="pgi:PG_1933"/>
<dbReference type="eggNOG" id="COG0091">
    <property type="taxonomic scope" value="Bacteria"/>
</dbReference>
<dbReference type="HOGENOM" id="CLU_083987_3_1_10"/>
<dbReference type="Proteomes" id="UP000000588">
    <property type="component" value="Chromosome"/>
</dbReference>
<dbReference type="GO" id="GO:0022625">
    <property type="term" value="C:cytosolic large ribosomal subunit"/>
    <property type="evidence" value="ECO:0007669"/>
    <property type="project" value="TreeGrafter"/>
</dbReference>
<dbReference type="GO" id="GO:0019843">
    <property type="term" value="F:rRNA binding"/>
    <property type="evidence" value="ECO:0007669"/>
    <property type="project" value="UniProtKB-UniRule"/>
</dbReference>
<dbReference type="GO" id="GO:0003735">
    <property type="term" value="F:structural constituent of ribosome"/>
    <property type="evidence" value="ECO:0007669"/>
    <property type="project" value="InterPro"/>
</dbReference>
<dbReference type="GO" id="GO:0006412">
    <property type="term" value="P:translation"/>
    <property type="evidence" value="ECO:0007669"/>
    <property type="project" value="UniProtKB-UniRule"/>
</dbReference>
<dbReference type="CDD" id="cd00336">
    <property type="entry name" value="Ribosomal_L22"/>
    <property type="match status" value="1"/>
</dbReference>
<dbReference type="Gene3D" id="3.90.470.10">
    <property type="entry name" value="Ribosomal protein L22/L17"/>
    <property type="match status" value="1"/>
</dbReference>
<dbReference type="HAMAP" id="MF_01331_B">
    <property type="entry name" value="Ribosomal_uL22_B"/>
    <property type="match status" value="1"/>
</dbReference>
<dbReference type="InterPro" id="IPR001063">
    <property type="entry name" value="Ribosomal_uL22"/>
</dbReference>
<dbReference type="InterPro" id="IPR005727">
    <property type="entry name" value="Ribosomal_uL22_bac/chlpt-type"/>
</dbReference>
<dbReference type="InterPro" id="IPR047867">
    <property type="entry name" value="Ribosomal_uL22_bac/org-type"/>
</dbReference>
<dbReference type="InterPro" id="IPR036394">
    <property type="entry name" value="Ribosomal_uL22_sf"/>
</dbReference>
<dbReference type="NCBIfam" id="TIGR01044">
    <property type="entry name" value="rplV_bact"/>
    <property type="match status" value="1"/>
</dbReference>
<dbReference type="PANTHER" id="PTHR13501">
    <property type="entry name" value="CHLOROPLAST 50S RIBOSOMAL PROTEIN L22-RELATED"/>
    <property type="match status" value="1"/>
</dbReference>
<dbReference type="PANTHER" id="PTHR13501:SF8">
    <property type="entry name" value="LARGE RIBOSOMAL SUBUNIT PROTEIN UL22M"/>
    <property type="match status" value="1"/>
</dbReference>
<dbReference type="Pfam" id="PF00237">
    <property type="entry name" value="Ribosomal_L22"/>
    <property type="match status" value="1"/>
</dbReference>
<dbReference type="SUPFAM" id="SSF54843">
    <property type="entry name" value="Ribosomal protein L22"/>
    <property type="match status" value="1"/>
</dbReference>
<comment type="function">
    <text evidence="1">This protein binds specifically to 23S rRNA; its binding is stimulated by other ribosomal proteins, e.g. L4, L17, and L20. It is important during the early stages of 50S assembly. It makes multiple contacts with different domains of the 23S rRNA in the assembled 50S subunit and ribosome (By similarity).</text>
</comment>
<comment type="function">
    <text evidence="1">The globular domain of the protein is located near the polypeptide exit tunnel on the outside of the subunit, while an extended beta-hairpin is found that lines the wall of the exit tunnel in the center of the 70S ribosome.</text>
</comment>
<comment type="subunit">
    <text evidence="1">Part of the 50S ribosomal subunit.</text>
</comment>
<comment type="similarity">
    <text evidence="1">Belongs to the universal ribosomal protein uL22 family.</text>
</comment>
<comment type="sequence caution" evidence="2">
    <conflict type="erroneous initiation">
        <sequence resource="EMBL-CDS" id="AAQ66914"/>
    </conflict>
</comment>
<proteinExistence type="inferred from homology"/>
<evidence type="ECO:0000255" key="1">
    <source>
        <dbReference type="HAMAP-Rule" id="MF_01331"/>
    </source>
</evidence>
<evidence type="ECO:0000305" key="2"/>
<keyword id="KW-1185">Reference proteome</keyword>
<keyword id="KW-0687">Ribonucleoprotein</keyword>
<keyword id="KW-0689">Ribosomal protein</keyword>
<keyword id="KW-0694">RNA-binding</keyword>
<keyword id="KW-0699">rRNA-binding</keyword>
<feature type="chain" id="PRO_0000125199" description="Large ribosomal subunit protein uL22">
    <location>
        <begin position="1"/>
        <end position="134"/>
    </location>
</feature>
<accession>Q7MTL8</accession>